<name>CRGC_MOUSE</name>
<reference key="1">
    <citation type="journal article" date="1993" name="Gene">
        <title>Genomic sequences of murine gamma B- and gamma C-crystallin-encoding genes: promoter analysis and complete evolutionary pattern of mouse, rat and human gamma-crystallins.</title>
        <authorList>
            <person name="Graw J."/>
            <person name="Liebstein A."/>
            <person name="Pietrowski D."/>
            <person name="Schmitt-John T."/>
            <person name="Werner T."/>
        </authorList>
    </citation>
    <scope>NUCLEOTIDE SEQUENCE</scope>
    <source>
        <strain>102 X C3H</strain>
        <tissue>Liver</tissue>
    </source>
</reference>
<reference key="2">
    <citation type="journal article" date="2004" name="Genome Res.">
        <title>The status, quality, and expansion of the NIH full-length cDNA project: the Mammalian Gene Collection (MGC).</title>
        <authorList>
            <consortium name="The MGC Project Team"/>
        </authorList>
    </citation>
    <scope>NUCLEOTIDE SEQUENCE [LARGE SCALE MRNA]</scope>
    <source>
        <strain>C57BL/6J</strain>
        <tissue>Brain</tissue>
    </source>
</reference>
<reference key="3">
    <citation type="journal article" date="1992" name="Exp. Eye Res.">
        <title>Temporal regulation of six crystallin transcripts during mouse lens development.</title>
        <authorList>
            <person name="Goring D.R."/>
            <person name="Breitman M.L."/>
            <person name="Tsui L.-C."/>
        </authorList>
    </citation>
    <scope>NUCLEOTIDE SEQUENCE OF 8-158</scope>
    <source>
        <strain>CD-1</strain>
        <tissue>Eye</tissue>
    </source>
</reference>
<feature type="chain" id="PRO_0000057597" description="Gamma-crystallin C">
    <location>
        <begin position="1"/>
        <end position="174"/>
    </location>
</feature>
<feature type="domain" description="Beta/gamma crystallin 'Greek key' 1" evidence="2">
    <location>
        <begin position="2"/>
        <end position="40"/>
    </location>
</feature>
<feature type="domain" description="Beta/gamma crystallin 'Greek key' 2" evidence="2">
    <location>
        <begin position="41"/>
        <end position="83"/>
    </location>
</feature>
<feature type="domain" description="Beta/gamma crystallin 'Greek key' 3" evidence="2">
    <location>
        <begin position="88"/>
        <end position="128"/>
    </location>
</feature>
<feature type="domain" description="Beta/gamma crystallin 'Greek key' 4" evidence="2">
    <location>
        <begin position="129"/>
        <end position="171"/>
    </location>
</feature>
<feature type="region of interest" description="Connecting peptide">
    <location>
        <begin position="84"/>
        <end position="87"/>
    </location>
</feature>
<feature type="modified residue" description="S-methylcysteine" evidence="1">
    <location>
        <position position="23"/>
    </location>
</feature>
<feature type="sequence variant" description="In strain: CD-1.">
    <original>S</original>
    <variation>G</variation>
    <location>
        <position position="11"/>
    </location>
</feature>
<feature type="sequence variant" description="In strain: CD-1.">
    <original>G</original>
    <variation>A</variation>
    <location>
        <position position="14"/>
    </location>
</feature>
<feature type="sequence variant" description="In strain: CD-1.">
    <original>FQ</original>
    <variation>YH</variation>
    <location>
        <begin position="154"/>
        <end position="155"/>
    </location>
</feature>
<feature type="strand" evidence="4">
    <location>
        <begin position="3"/>
        <end position="9"/>
    </location>
</feature>
<feature type="turn" evidence="4">
    <location>
        <begin position="10"/>
        <end position="12"/>
    </location>
</feature>
<feature type="strand" evidence="4">
    <location>
        <begin position="13"/>
        <end position="21"/>
    </location>
</feature>
<feature type="turn" evidence="4">
    <location>
        <begin position="27"/>
        <end position="29"/>
    </location>
</feature>
<feature type="strand" evidence="4">
    <location>
        <begin position="35"/>
        <end position="48"/>
    </location>
</feature>
<feature type="turn" evidence="4">
    <location>
        <begin position="49"/>
        <end position="51"/>
    </location>
</feature>
<feature type="strand" evidence="4">
    <location>
        <begin position="52"/>
        <end position="58"/>
    </location>
</feature>
<feature type="strand" evidence="4">
    <location>
        <begin position="60"/>
        <end position="65"/>
    </location>
</feature>
<feature type="helix" evidence="4">
    <location>
        <begin position="66"/>
        <end position="69"/>
    </location>
</feature>
<feature type="strand" evidence="4">
    <location>
        <begin position="72"/>
        <end position="74"/>
    </location>
</feature>
<feature type="strand" evidence="4">
    <location>
        <begin position="78"/>
        <end position="82"/>
    </location>
</feature>
<feature type="strand" evidence="4">
    <location>
        <begin position="89"/>
        <end position="95"/>
    </location>
</feature>
<feature type="helix" evidence="4">
    <location>
        <begin position="96"/>
        <end position="98"/>
    </location>
</feature>
<feature type="strand" evidence="4">
    <location>
        <begin position="99"/>
        <end position="107"/>
    </location>
</feature>
<feature type="helix" evidence="4">
    <location>
        <begin position="112"/>
        <end position="115"/>
    </location>
</feature>
<feature type="strand" evidence="4">
    <location>
        <begin position="123"/>
        <end position="129"/>
    </location>
</feature>
<feature type="strand" evidence="4">
    <location>
        <begin position="131"/>
        <end position="136"/>
    </location>
</feature>
<feature type="turn" evidence="4">
    <location>
        <begin position="137"/>
        <end position="139"/>
    </location>
</feature>
<feature type="strand" evidence="4">
    <location>
        <begin position="140"/>
        <end position="146"/>
    </location>
</feature>
<feature type="strand" evidence="4">
    <location>
        <begin position="148"/>
        <end position="153"/>
    </location>
</feature>
<feature type="helix" evidence="4">
    <location>
        <begin position="154"/>
        <end position="156"/>
    </location>
</feature>
<feature type="strand" evidence="4">
    <location>
        <begin position="160"/>
        <end position="163"/>
    </location>
</feature>
<feature type="strand" evidence="4">
    <location>
        <begin position="166"/>
        <end position="169"/>
    </location>
</feature>
<protein>
    <recommendedName>
        <fullName>Gamma-crystallin C</fullName>
    </recommendedName>
    <alternativeName>
        <fullName>Gamma-C-crystallin</fullName>
    </alternativeName>
</protein>
<organism>
    <name type="scientific">Mus musculus</name>
    <name type="common">Mouse</name>
    <dbReference type="NCBI Taxonomy" id="10090"/>
    <lineage>
        <taxon>Eukaryota</taxon>
        <taxon>Metazoa</taxon>
        <taxon>Chordata</taxon>
        <taxon>Craniata</taxon>
        <taxon>Vertebrata</taxon>
        <taxon>Euteleostomi</taxon>
        <taxon>Mammalia</taxon>
        <taxon>Eutheria</taxon>
        <taxon>Euarchontoglires</taxon>
        <taxon>Glires</taxon>
        <taxon>Rodentia</taxon>
        <taxon>Myomorpha</taxon>
        <taxon>Muroidea</taxon>
        <taxon>Muridae</taxon>
        <taxon>Murinae</taxon>
        <taxon>Mus</taxon>
        <taxon>Mus</taxon>
    </lineage>
</organism>
<dbReference type="EMBL" id="Z22574">
    <property type="protein sequence ID" value="CAA80297.1"/>
    <property type="molecule type" value="Genomic_DNA"/>
</dbReference>
<dbReference type="EMBL" id="BC056454">
    <property type="protein sequence ID" value="AAH56454.1"/>
    <property type="molecule type" value="mRNA"/>
</dbReference>
<dbReference type="EMBL" id="M64544">
    <property type="protein sequence ID" value="AAA53524.1"/>
    <property type="molecule type" value="mRNA"/>
</dbReference>
<dbReference type="CCDS" id="CCDS15012.1"/>
<dbReference type="PIR" id="I48360">
    <property type="entry name" value="S33526"/>
</dbReference>
<dbReference type="PIR" id="I49614">
    <property type="entry name" value="I49614"/>
</dbReference>
<dbReference type="RefSeq" id="NP_031801.1">
    <property type="nucleotide sequence ID" value="NM_007775.2"/>
</dbReference>
<dbReference type="PDB" id="2V2U">
    <property type="method" value="X-ray"/>
    <property type="resolution" value="1.90 A"/>
    <property type="chains" value="A/B=2-174"/>
</dbReference>
<dbReference type="PDBsum" id="2V2U"/>
<dbReference type="SMR" id="Q61597"/>
<dbReference type="BioGRID" id="198918">
    <property type="interactions" value="1"/>
</dbReference>
<dbReference type="FunCoup" id="Q61597">
    <property type="interactions" value="915"/>
</dbReference>
<dbReference type="STRING" id="10090.ENSMUSP00000109698"/>
<dbReference type="PhosphoSitePlus" id="Q61597"/>
<dbReference type="PaxDb" id="10090-ENSMUSP00000109698"/>
<dbReference type="ProteomicsDB" id="284168"/>
<dbReference type="Antibodypedia" id="34194">
    <property type="antibodies" value="173 antibodies from 27 providers"/>
</dbReference>
<dbReference type="DNASU" id="12966"/>
<dbReference type="Ensembl" id="ENSMUST00000027089.15">
    <property type="protein sequence ID" value="ENSMUSP00000027089.9"/>
    <property type="gene ID" value="ENSMUSG00000025952.16"/>
</dbReference>
<dbReference type="GeneID" id="12966"/>
<dbReference type="KEGG" id="mmu:12966"/>
<dbReference type="UCSC" id="uc007bhi.2">
    <property type="organism name" value="mouse"/>
</dbReference>
<dbReference type="AGR" id="MGI:88523"/>
<dbReference type="CTD" id="1420"/>
<dbReference type="MGI" id="MGI:88523">
    <property type="gene designation" value="Crygc"/>
</dbReference>
<dbReference type="VEuPathDB" id="HostDB:ENSMUSG00000025952"/>
<dbReference type="eggNOG" id="ENOG502RXJY">
    <property type="taxonomic scope" value="Eukaryota"/>
</dbReference>
<dbReference type="GeneTree" id="ENSGT00940000159232"/>
<dbReference type="HOGENOM" id="CLU_081883_1_1_1"/>
<dbReference type="InParanoid" id="Q61597"/>
<dbReference type="OrthoDB" id="8407241at2759"/>
<dbReference type="BioGRID-ORCS" id="12966">
    <property type="hits" value="1 hit in 77 CRISPR screens"/>
</dbReference>
<dbReference type="EvolutionaryTrace" id="Q61597"/>
<dbReference type="PRO" id="PR:Q61597"/>
<dbReference type="Proteomes" id="UP000000589">
    <property type="component" value="Chromosome 1"/>
</dbReference>
<dbReference type="RNAct" id="Q61597">
    <property type="molecule type" value="protein"/>
</dbReference>
<dbReference type="Bgee" id="ENSMUSG00000025952">
    <property type="expression patterns" value="Expressed in lens of camera-type eye and 45 other cell types or tissues"/>
</dbReference>
<dbReference type="ExpressionAtlas" id="Q61597">
    <property type="expression patterns" value="baseline and differential"/>
</dbReference>
<dbReference type="GO" id="GO:0005212">
    <property type="term" value="F:structural constituent of eye lens"/>
    <property type="evidence" value="ECO:0000304"/>
    <property type="project" value="MGI"/>
</dbReference>
<dbReference type="GO" id="GO:0043010">
    <property type="term" value="P:camera-type eye development"/>
    <property type="evidence" value="ECO:0000315"/>
    <property type="project" value="MGI"/>
</dbReference>
<dbReference type="GO" id="GO:0001654">
    <property type="term" value="P:eye development"/>
    <property type="evidence" value="ECO:0000315"/>
    <property type="project" value="MGI"/>
</dbReference>
<dbReference type="FunFam" id="2.60.20.10:FF:000001">
    <property type="entry name" value="Crystallin gamma S"/>
    <property type="match status" value="1"/>
</dbReference>
<dbReference type="FunFam" id="2.60.20.10:FF:000003">
    <property type="entry name" value="Crystallin gamma S"/>
    <property type="match status" value="1"/>
</dbReference>
<dbReference type="Gene3D" id="2.60.20.10">
    <property type="entry name" value="Crystallins"/>
    <property type="match status" value="2"/>
</dbReference>
<dbReference type="InterPro" id="IPR050252">
    <property type="entry name" value="Beta/Gamma-Crystallin"/>
</dbReference>
<dbReference type="InterPro" id="IPR001064">
    <property type="entry name" value="Beta/gamma_crystallin"/>
</dbReference>
<dbReference type="InterPro" id="IPR011024">
    <property type="entry name" value="G_crystallin-like"/>
</dbReference>
<dbReference type="PANTHER" id="PTHR11818">
    <property type="entry name" value="BETA/GAMMA CRYSTALLIN"/>
    <property type="match status" value="1"/>
</dbReference>
<dbReference type="PANTHER" id="PTHR11818:SF32">
    <property type="entry name" value="GAMMA-CRYSTALLIN C"/>
    <property type="match status" value="1"/>
</dbReference>
<dbReference type="Pfam" id="PF00030">
    <property type="entry name" value="Crystall"/>
    <property type="match status" value="2"/>
</dbReference>
<dbReference type="PRINTS" id="PR01367">
    <property type="entry name" value="BGCRYSTALLIN"/>
</dbReference>
<dbReference type="SMART" id="SM00247">
    <property type="entry name" value="XTALbg"/>
    <property type="match status" value="2"/>
</dbReference>
<dbReference type="SUPFAM" id="SSF49695">
    <property type="entry name" value="gamma-Crystallin-like"/>
    <property type="match status" value="1"/>
</dbReference>
<dbReference type="PROSITE" id="PS50915">
    <property type="entry name" value="CRYSTALLIN_BETA_GAMMA"/>
    <property type="match status" value="4"/>
</dbReference>
<comment type="function">
    <text>Crystallins are the dominant structural components of the vertebrate eye lens.</text>
</comment>
<comment type="domain">
    <text>Has a two-domain beta-structure, folded into four very similar Greek key motifs.</text>
</comment>
<comment type="miscellaneous">
    <text>There are six different gamma crystallins identified in mouse lens.</text>
</comment>
<comment type="similarity">
    <text evidence="3">Belongs to the beta/gamma-crystallin family.</text>
</comment>
<keyword id="KW-0002">3D-structure</keyword>
<keyword id="KW-0273">Eye lens protein</keyword>
<keyword id="KW-0488">Methylation</keyword>
<keyword id="KW-1185">Reference proteome</keyword>
<keyword id="KW-0677">Repeat</keyword>
<gene>
    <name type="primary">Crygc</name>
    <name type="synonym">Gammab-cry</name>
</gene>
<sequence>MGKITFFEDRSFQGRCYECSSDCPNLQTYFSRCNSVRVDSGCWMLYERPNYQGHQYFLRRGEYPDYQQWMGFSDSIRSCRLIPHAGSHRMRLYEKEDHKGVMMELSEDCSCIQDRFHLSEVRSLQVLEGCWVLYEMPNYRGRQYLLRPQEYRRFQDWGSVDAKAGSLRRVVDLY</sequence>
<proteinExistence type="evidence at protein level"/>
<accession>Q61597</accession>
<accession>Q03739</accession>
<evidence type="ECO:0000250" key="1"/>
<evidence type="ECO:0000255" key="2">
    <source>
        <dbReference type="PROSITE-ProRule" id="PRU00028"/>
    </source>
</evidence>
<evidence type="ECO:0000305" key="3"/>
<evidence type="ECO:0007829" key="4">
    <source>
        <dbReference type="PDB" id="2V2U"/>
    </source>
</evidence>